<reference key="1">
    <citation type="journal article" date="2005" name="Proc. Natl. Acad. Sci. U.S.A.">
        <title>Complete genome sequence of Vibrio fischeri: a symbiotic bacterium with pathogenic congeners.</title>
        <authorList>
            <person name="Ruby E.G."/>
            <person name="Urbanowski M."/>
            <person name="Campbell J."/>
            <person name="Dunn A."/>
            <person name="Faini M."/>
            <person name="Gunsalus R."/>
            <person name="Lostroh P."/>
            <person name="Lupp C."/>
            <person name="McCann J."/>
            <person name="Millikan D."/>
            <person name="Schaefer A."/>
            <person name="Stabb E."/>
            <person name="Stevens A."/>
            <person name="Visick K."/>
            <person name="Whistler C."/>
            <person name="Greenberg E.P."/>
        </authorList>
    </citation>
    <scope>NUCLEOTIDE SEQUENCE [LARGE SCALE GENOMIC DNA]</scope>
    <source>
        <strain>ATCC 700601 / ES114</strain>
    </source>
</reference>
<comment type="function">
    <text evidence="1">This is one of the proteins that bind and probably mediate the attachment of the 5S RNA into the large ribosomal subunit, where it forms part of the central protuberance.</text>
</comment>
<comment type="subunit">
    <text evidence="1">Part of the 50S ribosomal subunit; part of the 5S rRNA/L5/L18/L25 subcomplex. Contacts the 5S and 23S rRNAs.</text>
</comment>
<comment type="similarity">
    <text evidence="1">Belongs to the universal ribosomal protein uL18 family.</text>
</comment>
<organism>
    <name type="scientific">Aliivibrio fischeri (strain ATCC 700601 / ES114)</name>
    <name type="common">Vibrio fischeri</name>
    <dbReference type="NCBI Taxonomy" id="312309"/>
    <lineage>
        <taxon>Bacteria</taxon>
        <taxon>Pseudomonadati</taxon>
        <taxon>Pseudomonadota</taxon>
        <taxon>Gammaproteobacteria</taxon>
        <taxon>Vibrionales</taxon>
        <taxon>Vibrionaceae</taxon>
        <taxon>Aliivibrio</taxon>
    </lineage>
</organism>
<evidence type="ECO:0000255" key="1">
    <source>
        <dbReference type="HAMAP-Rule" id="MF_01337"/>
    </source>
</evidence>
<evidence type="ECO:0000305" key="2"/>
<protein>
    <recommendedName>
        <fullName evidence="1">Large ribosomal subunit protein uL18</fullName>
    </recommendedName>
    <alternativeName>
        <fullName evidence="2">50S ribosomal protein L18</fullName>
    </alternativeName>
</protein>
<keyword id="KW-1185">Reference proteome</keyword>
<keyword id="KW-0687">Ribonucleoprotein</keyword>
<keyword id="KW-0689">Ribosomal protein</keyword>
<keyword id="KW-0694">RNA-binding</keyword>
<keyword id="KW-0699">rRNA-binding</keyword>
<sequence length="117" mass="12700">MDKKASRIRRATRARRKIAELCATRLVVHRTPRHTYAQVIAPNGSEVIAAASTVEKAIREQLGSTSNKAAAEAIGKLIAERAIEKGITNVAFDRSGFQYHGRVAALAESAREAGLKF</sequence>
<dbReference type="EMBL" id="CP000020">
    <property type="protein sequence ID" value="AAW84748.1"/>
    <property type="molecule type" value="Genomic_DNA"/>
</dbReference>
<dbReference type="RefSeq" id="WP_011261082.1">
    <property type="nucleotide sequence ID" value="NC_006840.2"/>
</dbReference>
<dbReference type="RefSeq" id="YP_203636.1">
    <property type="nucleotide sequence ID" value="NC_006840.2"/>
</dbReference>
<dbReference type="SMR" id="Q5E898"/>
<dbReference type="STRING" id="312309.VF_0253"/>
<dbReference type="EnsemblBacteria" id="AAW84748">
    <property type="protein sequence ID" value="AAW84748"/>
    <property type="gene ID" value="VF_0253"/>
</dbReference>
<dbReference type="GeneID" id="54162874"/>
<dbReference type="KEGG" id="vfi:VF_0253"/>
<dbReference type="PATRIC" id="fig|312309.11.peg.248"/>
<dbReference type="eggNOG" id="COG0256">
    <property type="taxonomic scope" value="Bacteria"/>
</dbReference>
<dbReference type="HOGENOM" id="CLU_098841_0_1_6"/>
<dbReference type="OrthoDB" id="9810939at2"/>
<dbReference type="Proteomes" id="UP000000537">
    <property type="component" value="Chromosome I"/>
</dbReference>
<dbReference type="GO" id="GO:0022625">
    <property type="term" value="C:cytosolic large ribosomal subunit"/>
    <property type="evidence" value="ECO:0007669"/>
    <property type="project" value="TreeGrafter"/>
</dbReference>
<dbReference type="GO" id="GO:0008097">
    <property type="term" value="F:5S rRNA binding"/>
    <property type="evidence" value="ECO:0007669"/>
    <property type="project" value="TreeGrafter"/>
</dbReference>
<dbReference type="GO" id="GO:0003735">
    <property type="term" value="F:structural constituent of ribosome"/>
    <property type="evidence" value="ECO:0007669"/>
    <property type="project" value="InterPro"/>
</dbReference>
<dbReference type="GO" id="GO:0006412">
    <property type="term" value="P:translation"/>
    <property type="evidence" value="ECO:0007669"/>
    <property type="project" value="UniProtKB-UniRule"/>
</dbReference>
<dbReference type="CDD" id="cd00432">
    <property type="entry name" value="Ribosomal_L18_L5e"/>
    <property type="match status" value="1"/>
</dbReference>
<dbReference type="FunFam" id="3.30.420.100:FF:000001">
    <property type="entry name" value="50S ribosomal protein L18"/>
    <property type="match status" value="1"/>
</dbReference>
<dbReference type="Gene3D" id="3.30.420.100">
    <property type="match status" value="1"/>
</dbReference>
<dbReference type="HAMAP" id="MF_01337_B">
    <property type="entry name" value="Ribosomal_uL18_B"/>
    <property type="match status" value="1"/>
</dbReference>
<dbReference type="InterPro" id="IPR004389">
    <property type="entry name" value="Ribosomal_uL18_bac-type"/>
</dbReference>
<dbReference type="InterPro" id="IPR005484">
    <property type="entry name" value="Ribosomal_uL18_bac/euk"/>
</dbReference>
<dbReference type="NCBIfam" id="TIGR00060">
    <property type="entry name" value="L18_bact"/>
    <property type="match status" value="1"/>
</dbReference>
<dbReference type="PANTHER" id="PTHR12899">
    <property type="entry name" value="39S RIBOSOMAL PROTEIN L18, MITOCHONDRIAL"/>
    <property type="match status" value="1"/>
</dbReference>
<dbReference type="PANTHER" id="PTHR12899:SF3">
    <property type="entry name" value="LARGE RIBOSOMAL SUBUNIT PROTEIN UL18M"/>
    <property type="match status" value="1"/>
</dbReference>
<dbReference type="Pfam" id="PF00861">
    <property type="entry name" value="Ribosomal_L18p"/>
    <property type="match status" value="1"/>
</dbReference>
<dbReference type="SUPFAM" id="SSF53137">
    <property type="entry name" value="Translational machinery components"/>
    <property type="match status" value="1"/>
</dbReference>
<feature type="chain" id="PRO_0000131381" description="Large ribosomal subunit protein uL18">
    <location>
        <begin position="1"/>
        <end position="117"/>
    </location>
</feature>
<gene>
    <name evidence="1" type="primary">rplR</name>
    <name type="ordered locus">VF_0253</name>
</gene>
<accession>Q5E898</accession>
<name>RL18_ALIF1</name>
<proteinExistence type="inferred from homology"/>